<accession>Q4VZH0</accession>
<organism>
    <name type="scientific">Cucumis sativus</name>
    <name type="common">Cucumber</name>
    <dbReference type="NCBI Taxonomy" id="3659"/>
    <lineage>
        <taxon>Eukaryota</taxon>
        <taxon>Viridiplantae</taxon>
        <taxon>Streptophyta</taxon>
        <taxon>Embryophyta</taxon>
        <taxon>Tracheophyta</taxon>
        <taxon>Spermatophyta</taxon>
        <taxon>Magnoliopsida</taxon>
        <taxon>eudicotyledons</taxon>
        <taxon>Gunneridae</taxon>
        <taxon>Pentapetalae</taxon>
        <taxon>rosids</taxon>
        <taxon>fabids</taxon>
        <taxon>Cucurbitales</taxon>
        <taxon>Cucurbitaceae</taxon>
        <taxon>Benincaseae</taxon>
        <taxon>Cucumis</taxon>
    </lineage>
</organism>
<feature type="chain" id="PRO_0000362826" description="NAD(P)H-quinone oxidoreductase subunit 3, chloroplastic">
    <location>
        <begin position="1"/>
        <end position="120"/>
    </location>
</feature>
<feature type="transmembrane region" description="Helical" evidence="1">
    <location>
        <begin position="9"/>
        <end position="29"/>
    </location>
</feature>
<feature type="transmembrane region" description="Helical" evidence="1">
    <location>
        <begin position="64"/>
        <end position="84"/>
    </location>
</feature>
<feature type="transmembrane region" description="Helical" evidence="1">
    <location>
        <begin position="88"/>
        <end position="108"/>
    </location>
</feature>
<sequence length="120" mass="13881">MFLLYEYDIFWVFLIISSVIPILAFLISGVLAPLSKEPEKLSSYESGIEPMGDAWVQFRIRYYMFALVFVVFDVETVFLYPWAMSFDVLGVSVFIEALIFVLILIVGLVYAWRKGALEWS</sequence>
<gene>
    <name evidence="1" type="primary">ndhC</name>
    <name type="ordered locus">CsCp043</name>
</gene>
<protein>
    <recommendedName>
        <fullName evidence="1">NAD(P)H-quinone oxidoreductase subunit 3, chloroplastic</fullName>
        <ecNumber evidence="1">7.1.1.-</ecNumber>
    </recommendedName>
    <alternativeName>
        <fullName evidence="1">NAD(P)H dehydrogenase subunit 3</fullName>
    </alternativeName>
    <alternativeName>
        <fullName evidence="1">NADH-plastoquinone oxidoreductase subunit 3</fullName>
    </alternativeName>
</protein>
<geneLocation type="chloroplast"/>
<keyword id="KW-0150">Chloroplast</keyword>
<keyword id="KW-0472">Membrane</keyword>
<keyword id="KW-0520">NAD</keyword>
<keyword id="KW-0521">NADP</keyword>
<keyword id="KW-0934">Plastid</keyword>
<keyword id="KW-0618">Plastoquinone</keyword>
<keyword id="KW-0874">Quinone</keyword>
<keyword id="KW-0793">Thylakoid</keyword>
<keyword id="KW-1278">Translocase</keyword>
<keyword id="KW-0812">Transmembrane</keyword>
<keyword id="KW-1133">Transmembrane helix</keyword>
<keyword id="KW-0813">Transport</keyword>
<dbReference type="EC" id="7.1.1.-" evidence="1"/>
<dbReference type="EMBL" id="DQ119058">
    <property type="protein sequence ID" value="AAZ94656.1"/>
    <property type="molecule type" value="Genomic_DNA"/>
</dbReference>
<dbReference type="EMBL" id="AJ970307">
    <property type="protein sequence ID" value="CAJ00763.1"/>
    <property type="molecule type" value="Genomic_DNA"/>
</dbReference>
<dbReference type="EMBL" id="DQ865975">
    <property type="protein sequence ID" value="ABI97422.1"/>
    <property type="molecule type" value="Genomic_DNA"/>
</dbReference>
<dbReference type="EMBL" id="DQ865976">
    <property type="protein sequence ID" value="ABI98750.1"/>
    <property type="molecule type" value="Genomic_DNA"/>
</dbReference>
<dbReference type="RefSeq" id="YP_247604.1">
    <property type="nucleotide sequence ID" value="NC_007144.1"/>
</dbReference>
<dbReference type="SMR" id="Q4VZH0"/>
<dbReference type="GeneID" id="3429255"/>
<dbReference type="KEGG" id="csv:3429255"/>
<dbReference type="OrthoDB" id="154075at2759"/>
<dbReference type="GO" id="GO:0009535">
    <property type="term" value="C:chloroplast thylakoid membrane"/>
    <property type="evidence" value="ECO:0007669"/>
    <property type="project" value="UniProtKB-SubCell"/>
</dbReference>
<dbReference type="GO" id="GO:0008137">
    <property type="term" value="F:NADH dehydrogenase (ubiquinone) activity"/>
    <property type="evidence" value="ECO:0007669"/>
    <property type="project" value="InterPro"/>
</dbReference>
<dbReference type="GO" id="GO:0048038">
    <property type="term" value="F:quinone binding"/>
    <property type="evidence" value="ECO:0007669"/>
    <property type="project" value="UniProtKB-KW"/>
</dbReference>
<dbReference type="GO" id="GO:0019684">
    <property type="term" value="P:photosynthesis, light reaction"/>
    <property type="evidence" value="ECO:0007669"/>
    <property type="project" value="UniProtKB-UniRule"/>
</dbReference>
<dbReference type="FunFam" id="1.20.58.1610:FF:000001">
    <property type="entry name" value="NAD(P)H-quinone oxidoreductase subunit 3, chloroplastic"/>
    <property type="match status" value="1"/>
</dbReference>
<dbReference type="Gene3D" id="1.20.58.1610">
    <property type="entry name" value="NADH:ubiquinone/plastoquinone oxidoreductase, chain 3"/>
    <property type="match status" value="1"/>
</dbReference>
<dbReference type="HAMAP" id="MF_01394">
    <property type="entry name" value="NDH1_NuoA"/>
    <property type="match status" value="1"/>
</dbReference>
<dbReference type="InterPro" id="IPR023043">
    <property type="entry name" value="NAD(P)H_OxRDtase_bac/plastid"/>
</dbReference>
<dbReference type="InterPro" id="IPR000440">
    <property type="entry name" value="NADH_UbQ/plastoQ_OxRdtase_su3"/>
</dbReference>
<dbReference type="InterPro" id="IPR038430">
    <property type="entry name" value="NDAH_ubi_oxred_su3_sf"/>
</dbReference>
<dbReference type="PANTHER" id="PTHR11058">
    <property type="entry name" value="NADH-UBIQUINONE OXIDOREDUCTASE CHAIN 3"/>
    <property type="match status" value="1"/>
</dbReference>
<dbReference type="PANTHER" id="PTHR11058:SF9">
    <property type="entry name" value="NADH-UBIQUINONE OXIDOREDUCTASE CHAIN 3"/>
    <property type="match status" value="1"/>
</dbReference>
<dbReference type="Pfam" id="PF00507">
    <property type="entry name" value="Oxidored_q4"/>
    <property type="match status" value="1"/>
</dbReference>
<proteinExistence type="inferred from homology"/>
<name>NU3C_CUCSA</name>
<comment type="function">
    <text evidence="1">NDH shuttles electrons from NAD(P)H:plastoquinone, via FMN and iron-sulfur (Fe-S) centers, to quinones in the photosynthetic chain and possibly in a chloroplast respiratory chain. The immediate electron acceptor for the enzyme in this species is believed to be plastoquinone. Couples the redox reaction to proton translocation, and thus conserves the redox energy in a proton gradient.</text>
</comment>
<comment type="catalytic activity">
    <reaction evidence="1">
        <text>a plastoquinone + NADH + (n+1) H(+)(in) = a plastoquinol + NAD(+) + n H(+)(out)</text>
        <dbReference type="Rhea" id="RHEA:42608"/>
        <dbReference type="Rhea" id="RHEA-COMP:9561"/>
        <dbReference type="Rhea" id="RHEA-COMP:9562"/>
        <dbReference type="ChEBI" id="CHEBI:15378"/>
        <dbReference type="ChEBI" id="CHEBI:17757"/>
        <dbReference type="ChEBI" id="CHEBI:57540"/>
        <dbReference type="ChEBI" id="CHEBI:57945"/>
        <dbReference type="ChEBI" id="CHEBI:62192"/>
    </reaction>
</comment>
<comment type="catalytic activity">
    <reaction evidence="1">
        <text>a plastoquinone + NADPH + (n+1) H(+)(in) = a plastoquinol + NADP(+) + n H(+)(out)</text>
        <dbReference type="Rhea" id="RHEA:42612"/>
        <dbReference type="Rhea" id="RHEA-COMP:9561"/>
        <dbReference type="Rhea" id="RHEA-COMP:9562"/>
        <dbReference type="ChEBI" id="CHEBI:15378"/>
        <dbReference type="ChEBI" id="CHEBI:17757"/>
        <dbReference type="ChEBI" id="CHEBI:57783"/>
        <dbReference type="ChEBI" id="CHEBI:58349"/>
        <dbReference type="ChEBI" id="CHEBI:62192"/>
    </reaction>
</comment>
<comment type="subunit">
    <text evidence="1">NDH is composed of at least 16 different subunits, 5 of which are encoded in the nucleus.</text>
</comment>
<comment type="subcellular location">
    <subcellularLocation>
        <location evidence="1">Plastid</location>
        <location evidence="1">Chloroplast thylakoid membrane</location>
        <topology evidence="1">Multi-pass membrane protein</topology>
    </subcellularLocation>
</comment>
<comment type="similarity">
    <text evidence="1">Belongs to the complex I subunit 3 family.</text>
</comment>
<evidence type="ECO:0000255" key="1">
    <source>
        <dbReference type="HAMAP-Rule" id="MF_01394"/>
    </source>
</evidence>
<reference key="1">
    <citation type="journal article" date="2006" name="Plant Cell Rep.">
        <title>Complete sequence and organization of the cucumber (Cucumis sativus L. cv. Baekmibaekdadagi) chloroplast genome.</title>
        <authorList>
            <person name="Kim J.-S."/>
            <person name="Jung J.D."/>
            <person name="Lee J.-A."/>
            <person name="Park H.-W."/>
            <person name="Oh K.-H."/>
            <person name="Jeong W.J."/>
            <person name="Choi D.-W."/>
            <person name="Liu J.R."/>
            <person name="Cho K.Y."/>
        </authorList>
    </citation>
    <scope>NUCLEOTIDE SEQUENCE [LARGE SCALE GENOMIC DNA]</scope>
    <source>
        <strain>cv. Baekmibaekdadagi</strain>
    </source>
</reference>
<reference key="2">
    <citation type="journal article" date="2007" name="Cell. Mol. Biol. Lett.">
        <title>The complete structure of the cucumber (Cucumis sativus L.) chloroplast genome: its composition and comparative analysis.</title>
        <authorList>
            <person name="Plader W.W."/>
            <person name="Yukawa Y."/>
            <person name="Sugiura M."/>
            <person name="Malepszy S."/>
        </authorList>
    </citation>
    <scope>NUCLEOTIDE SEQUENCE [LARGE SCALE GENOMIC DNA]</scope>
    <source>
        <strain>cv. Borszczagowski</strain>
    </source>
</reference>
<reference key="3">
    <citation type="journal article" date="2007" name="Genome">
        <title>Sequencing cucumber (Cucumis sativus L.) chloroplast genomes identifies differences between chilling-tolerant and -susceptible cucumber lines.</title>
        <authorList>
            <person name="Chung S.-M."/>
            <person name="Gordon V.S."/>
            <person name="Staub J.E."/>
        </authorList>
    </citation>
    <scope>NUCLEOTIDE SEQUENCE [LARGE SCALE GENOMIC DNA]</scope>
    <source>
        <strain>cv. Chipper</strain>
        <strain>cv. Gy14</strain>
    </source>
</reference>